<comment type="function">
    <text evidence="1">Reversibly transfers an adenylyl group from ATP to 4'-phosphopantetheine, yielding dephospho-CoA (dPCoA) and pyrophosphate.</text>
</comment>
<comment type="catalytic activity">
    <reaction evidence="1">
        <text>(R)-4'-phosphopantetheine + ATP + H(+) = 3'-dephospho-CoA + diphosphate</text>
        <dbReference type="Rhea" id="RHEA:19801"/>
        <dbReference type="ChEBI" id="CHEBI:15378"/>
        <dbReference type="ChEBI" id="CHEBI:30616"/>
        <dbReference type="ChEBI" id="CHEBI:33019"/>
        <dbReference type="ChEBI" id="CHEBI:57328"/>
        <dbReference type="ChEBI" id="CHEBI:61723"/>
        <dbReference type="EC" id="2.7.7.3"/>
    </reaction>
</comment>
<comment type="cofactor">
    <cofactor evidence="1">
        <name>Mg(2+)</name>
        <dbReference type="ChEBI" id="CHEBI:18420"/>
    </cofactor>
</comment>
<comment type="pathway">
    <text evidence="1">Cofactor biosynthesis; coenzyme A biosynthesis; CoA from (R)-pantothenate: step 4/5.</text>
</comment>
<comment type="subunit">
    <text evidence="1">Homohexamer.</text>
</comment>
<comment type="subcellular location">
    <subcellularLocation>
        <location evidence="1">Cytoplasm</location>
    </subcellularLocation>
</comment>
<comment type="similarity">
    <text evidence="1">Belongs to the bacterial CoaD family.</text>
</comment>
<keyword id="KW-0067">ATP-binding</keyword>
<keyword id="KW-0173">Coenzyme A biosynthesis</keyword>
<keyword id="KW-0963">Cytoplasm</keyword>
<keyword id="KW-0460">Magnesium</keyword>
<keyword id="KW-0547">Nucleotide-binding</keyword>
<keyword id="KW-0548">Nucleotidyltransferase</keyword>
<keyword id="KW-0808">Transferase</keyword>
<reference key="1">
    <citation type="journal article" date="2002" name="Proc. Natl. Acad. Sci. U.S.A.">
        <title>The genome sequence of the facultative intracellular pathogen Brucella melitensis.</title>
        <authorList>
            <person name="DelVecchio V.G."/>
            <person name="Kapatral V."/>
            <person name="Redkar R.J."/>
            <person name="Patra G."/>
            <person name="Mujer C."/>
            <person name="Los T."/>
            <person name="Ivanova N."/>
            <person name="Anderson I."/>
            <person name="Bhattacharyya A."/>
            <person name="Lykidis A."/>
            <person name="Reznik G."/>
            <person name="Jablonski L."/>
            <person name="Larsen N."/>
            <person name="D'Souza M."/>
            <person name="Bernal A."/>
            <person name="Mazur M."/>
            <person name="Goltsman E."/>
            <person name="Selkov E."/>
            <person name="Elzer P.H."/>
            <person name="Hagius S."/>
            <person name="O'Callaghan D."/>
            <person name="Letesson J.-J."/>
            <person name="Haselkorn R."/>
            <person name="Kyrpides N.C."/>
            <person name="Overbeek R."/>
        </authorList>
    </citation>
    <scope>NUCLEOTIDE SEQUENCE [LARGE SCALE GENOMIC DNA]</scope>
    <source>
        <strain>ATCC 23456 / CCUG 17765 / NCTC 10094 / 16M</strain>
    </source>
</reference>
<dbReference type="EC" id="2.7.7.3" evidence="1"/>
<dbReference type="EMBL" id="AE008917">
    <property type="protein sequence ID" value="AAL52067.1"/>
    <property type="molecule type" value="Genomic_DNA"/>
</dbReference>
<dbReference type="PIR" id="AH3362">
    <property type="entry name" value="AH3362"/>
</dbReference>
<dbReference type="RefSeq" id="WP_002964224.1">
    <property type="nucleotide sequence ID" value="NZ_GG703780.1"/>
</dbReference>
<dbReference type="SMR" id="P63814"/>
<dbReference type="GeneID" id="93016563"/>
<dbReference type="KEGG" id="bme:BMEI0886"/>
<dbReference type="KEGG" id="bmel:DK63_535"/>
<dbReference type="PATRIC" id="fig|224914.52.peg.558"/>
<dbReference type="eggNOG" id="COG0669">
    <property type="taxonomic scope" value="Bacteria"/>
</dbReference>
<dbReference type="UniPathway" id="UPA00241">
    <property type="reaction ID" value="UER00355"/>
</dbReference>
<dbReference type="Proteomes" id="UP000000419">
    <property type="component" value="Chromosome I"/>
</dbReference>
<dbReference type="GO" id="GO:0005737">
    <property type="term" value="C:cytoplasm"/>
    <property type="evidence" value="ECO:0007669"/>
    <property type="project" value="UniProtKB-SubCell"/>
</dbReference>
<dbReference type="GO" id="GO:0005524">
    <property type="term" value="F:ATP binding"/>
    <property type="evidence" value="ECO:0007669"/>
    <property type="project" value="UniProtKB-KW"/>
</dbReference>
<dbReference type="GO" id="GO:0004595">
    <property type="term" value="F:pantetheine-phosphate adenylyltransferase activity"/>
    <property type="evidence" value="ECO:0007669"/>
    <property type="project" value="UniProtKB-UniRule"/>
</dbReference>
<dbReference type="GO" id="GO:0015937">
    <property type="term" value="P:coenzyme A biosynthetic process"/>
    <property type="evidence" value="ECO:0007669"/>
    <property type="project" value="UniProtKB-UniRule"/>
</dbReference>
<dbReference type="CDD" id="cd02163">
    <property type="entry name" value="PPAT"/>
    <property type="match status" value="1"/>
</dbReference>
<dbReference type="Gene3D" id="3.40.50.620">
    <property type="entry name" value="HUPs"/>
    <property type="match status" value="1"/>
</dbReference>
<dbReference type="HAMAP" id="MF_00151">
    <property type="entry name" value="PPAT_bact"/>
    <property type="match status" value="1"/>
</dbReference>
<dbReference type="InterPro" id="IPR004821">
    <property type="entry name" value="Cyt_trans-like"/>
</dbReference>
<dbReference type="InterPro" id="IPR001980">
    <property type="entry name" value="PPAT"/>
</dbReference>
<dbReference type="InterPro" id="IPR014729">
    <property type="entry name" value="Rossmann-like_a/b/a_fold"/>
</dbReference>
<dbReference type="NCBIfam" id="TIGR01510">
    <property type="entry name" value="coaD_prev_kdtB"/>
    <property type="match status" value="1"/>
</dbReference>
<dbReference type="NCBIfam" id="TIGR00125">
    <property type="entry name" value="cyt_tran_rel"/>
    <property type="match status" value="1"/>
</dbReference>
<dbReference type="PANTHER" id="PTHR21342">
    <property type="entry name" value="PHOSPHOPANTETHEINE ADENYLYLTRANSFERASE"/>
    <property type="match status" value="1"/>
</dbReference>
<dbReference type="PANTHER" id="PTHR21342:SF1">
    <property type="entry name" value="PHOSPHOPANTETHEINE ADENYLYLTRANSFERASE"/>
    <property type="match status" value="1"/>
</dbReference>
<dbReference type="Pfam" id="PF01467">
    <property type="entry name" value="CTP_transf_like"/>
    <property type="match status" value="1"/>
</dbReference>
<dbReference type="PRINTS" id="PR01020">
    <property type="entry name" value="LPSBIOSNTHSS"/>
</dbReference>
<dbReference type="SUPFAM" id="SSF52374">
    <property type="entry name" value="Nucleotidylyl transferase"/>
    <property type="match status" value="1"/>
</dbReference>
<accession>P63814</accession>
<accession>Q8G0J8</accession>
<accession>Q8YHB6</accession>
<sequence>MTIAIYAGSFDPVTNGHIDVLKGALRLADQVIVAIGMHPGKKPLFSFDERVALIEASAKAVLHKDAARVSVIAFDGLVIDAARKHGAQLMVRGLRDGTDLDYEMQMAGMNGTMAPELQTVFLPADPAVRTITATLVRQIASMGGDIKPFVPVAVAAALNTKFKS</sequence>
<evidence type="ECO:0000255" key="1">
    <source>
        <dbReference type="HAMAP-Rule" id="MF_00151"/>
    </source>
</evidence>
<name>COAD_BRUME</name>
<feature type="chain" id="PRO_0000156182" description="Phosphopantetheine adenylyltransferase">
    <location>
        <begin position="1"/>
        <end position="164"/>
    </location>
</feature>
<feature type="binding site" evidence="1">
    <location>
        <begin position="9"/>
        <end position="10"/>
    </location>
    <ligand>
        <name>ATP</name>
        <dbReference type="ChEBI" id="CHEBI:30616"/>
    </ligand>
</feature>
<feature type="binding site" evidence="1">
    <location>
        <position position="9"/>
    </location>
    <ligand>
        <name>substrate</name>
    </ligand>
</feature>
<feature type="binding site" evidence="1">
    <location>
        <position position="17"/>
    </location>
    <ligand>
        <name>ATP</name>
        <dbReference type="ChEBI" id="CHEBI:30616"/>
    </ligand>
</feature>
<feature type="binding site" evidence="1">
    <location>
        <position position="41"/>
    </location>
    <ligand>
        <name>substrate</name>
    </ligand>
</feature>
<feature type="binding site" evidence="1">
    <location>
        <position position="78"/>
    </location>
    <ligand>
        <name>substrate</name>
    </ligand>
</feature>
<feature type="binding site" evidence="1">
    <location>
        <position position="92"/>
    </location>
    <ligand>
        <name>substrate</name>
    </ligand>
</feature>
<feature type="binding site" evidence="1">
    <location>
        <begin position="93"/>
        <end position="95"/>
    </location>
    <ligand>
        <name>ATP</name>
        <dbReference type="ChEBI" id="CHEBI:30616"/>
    </ligand>
</feature>
<feature type="binding site" evidence="1">
    <location>
        <position position="103"/>
    </location>
    <ligand>
        <name>ATP</name>
        <dbReference type="ChEBI" id="CHEBI:30616"/>
    </ligand>
</feature>
<feature type="binding site" evidence="1">
    <location>
        <begin position="128"/>
        <end position="134"/>
    </location>
    <ligand>
        <name>ATP</name>
        <dbReference type="ChEBI" id="CHEBI:30616"/>
    </ligand>
</feature>
<feature type="site" description="Transition state stabilizer" evidence="1">
    <location>
        <position position="17"/>
    </location>
</feature>
<proteinExistence type="inferred from homology"/>
<protein>
    <recommendedName>
        <fullName evidence="1">Phosphopantetheine adenylyltransferase</fullName>
        <ecNumber evidence="1">2.7.7.3</ecNumber>
    </recommendedName>
    <alternativeName>
        <fullName evidence="1">Dephospho-CoA pyrophosphorylase</fullName>
    </alternativeName>
    <alternativeName>
        <fullName evidence="1">Pantetheine-phosphate adenylyltransferase</fullName>
        <shortName evidence="1">PPAT</shortName>
    </alternativeName>
</protein>
<gene>
    <name evidence="1" type="primary">coaD</name>
    <name type="ordered locus">BMEI0886</name>
</gene>
<organism>
    <name type="scientific">Brucella melitensis biotype 1 (strain ATCC 23456 / CCUG 17765 / NCTC 10094 / 16M)</name>
    <dbReference type="NCBI Taxonomy" id="224914"/>
    <lineage>
        <taxon>Bacteria</taxon>
        <taxon>Pseudomonadati</taxon>
        <taxon>Pseudomonadota</taxon>
        <taxon>Alphaproteobacteria</taxon>
        <taxon>Hyphomicrobiales</taxon>
        <taxon>Brucellaceae</taxon>
        <taxon>Brucella/Ochrobactrum group</taxon>
        <taxon>Brucella</taxon>
    </lineage>
</organism>